<accession>Q5HTB5</accession>
<comment type="function">
    <text evidence="1">Catalyzes the deamination of dCTP to dUTP.</text>
</comment>
<comment type="catalytic activity">
    <reaction evidence="1">
        <text>dCTP + H2O + H(+) = dUTP + NH4(+)</text>
        <dbReference type="Rhea" id="RHEA:22680"/>
        <dbReference type="ChEBI" id="CHEBI:15377"/>
        <dbReference type="ChEBI" id="CHEBI:15378"/>
        <dbReference type="ChEBI" id="CHEBI:28938"/>
        <dbReference type="ChEBI" id="CHEBI:61481"/>
        <dbReference type="ChEBI" id="CHEBI:61555"/>
        <dbReference type="EC" id="3.5.4.13"/>
    </reaction>
</comment>
<comment type="pathway">
    <text evidence="1">Pyrimidine metabolism; dUMP biosynthesis; dUMP from dCTP (dUTP route): step 1/2.</text>
</comment>
<comment type="subunit">
    <text evidence="1">Homotrimer.</text>
</comment>
<comment type="similarity">
    <text evidence="1">Belongs to the dCTP deaminase family.</text>
</comment>
<keyword id="KW-0378">Hydrolase</keyword>
<keyword id="KW-0546">Nucleotide metabolism</keyword>
<keyword id="KW-0547">Nucleotide-binding</keyword>
<organism>
    <name type="scientific">Campylobacter jejuni (strain RM1221)</name>
    <dbReference type="NCBI Taxonomy" id="195099"/>
    <lineage>
        <taxon>Bacteria</taxon>
        <taxon>Pseudomonadati</taxon>
        <taxon>Campylobacterota</taxon>
        <taxon>Epsilonproteobacteria</taxon>
        <taxon>Campylobacterales</taxon>
        <taxon>Campylobacteraceae</taxon>
        <taxon>Campylobacter</taxon>
    </lineage>
</organism>
<dbReference type="EC" id="3.5.4.13" evidence="1"/>
<dbReference type="EMBL" id="CP000025">
    <property type="protein sequence ID" value="AAW35925.1"/>
    <property type="molecule type" value="Genomic_DNA"/>
</dbReference>
<dbReference type="RefSeq" id="WP_002859334.1">
    <property type="nucleotide sequence ID" value="NC_003912.7"/>
</dbReference>
<dbReference type="SMR" id="Q5HTB5"/>
<dbReference type="KEGG" id="cjr:CJE1484"/>
<dbReference type="HOGENOM" id="CLU_087476_4_0_7"/>
<dbReference type="UniPathway" id="UPA00610">
    <property type="reaction ID" value="UER00665"/>
</dbReference>
<dbReference type="GO" id="GO:0008829">
    <property type="term" value="F:dCTP deaminase activity"/>
    <property type="evidence" value="ECO:0007669"/>
    <property type="project" value="UniProtKB-UniRule"/>
</dbReference>
<dbReference type="GO" id="GO:0000166">
    <property type="term" value="F:nucleotide binding"/>
    <property type="evidence" value="ECO:0007669"/>
    <property type="project" value="UniProtKB-KW"/>
</dbReference>
<dbReference type="GO" id="GO:0006226">
    <property type="term" value="P:dUMP biosynthetic process"/>
    <property type="evidence" value="ECO:0007669"/>
    <property type="project" value="UniProtKB-UniPathway"/>
</dbReference>
<dbReference type="GO" id="GO:0006229">
    <property type="term" value="P:dUTP biosynthetic process"/>
    <property type="evidence" value="ECO:0007669"/>
    <property type="project" value="UniProtKB-UniRule"/>
</dbReference>
<dbReference type="GO" id="GO:0015949">
    <property type="term" value="P:nucleobase-containing small molecule interconversion"/>
    <property type="evidence" value="ECO:0007669"/>
    <property type="project" value="TreeGrafter"/>
</dbReference>
<dbReference type="CDD" id="cd07557">
    <property type="entry name" value="trimeric_dUTPase"/>
    <property type="match status" value="1"/>
</dbReference>
<dbReference type="FunFam" id="2.70.40.10:FF:000001">
    <property type="entry name" value="dCTP deaminase"/>
    <property type="match status" value="1"/>
</dbReference>
<dbReference type="Gene3D" id="2.70.40.10">
    <property type="match status" value="1"/>
</dbReference>
<dbReference type="HAMAP" id="MF_00146">
    <property type="entry name" value="dCTP_deaminase"/>
    <property type="match status" value="1"/>
</dbReference>
<dbReference type="InterPro" id="IPR011962">
    <property type="entry name" value="dCTP_deaminase"/>
</dbReference>
<dbReference type="InterPro" id="IPR036157">
    <property type="entry name" value="dUTPase-like_sf"/>
</dbReference>
<dbReference type="InterPro" id="IPR033704">
    <property type="entry name" value="dUTPase_trimeric"/>
</dbReference>
<dbReference type="NCBIfam" id="TIGR02274">
    <property type="entry name" value="dCTP_deam"/>
    <property type="match status" value="1"/>
</dbReference>
<dbReference type="PANTHER" id="PTHR42680">
    <property type="entry name" value="DCTP DEAMINASE"/>
    <property type="match status" value="1"/>
</dbReference>
<dbReference type="PANTHER" id="PTHR42680:SF3">
    <property type="entry name" value="DCTP DEAMINASE"/>
    <property type="match status" value="1"/>
</dbReference>
<dbReference type="Pfam" id="PF22769">
    <property type="entry name" value="DCD"/>
    <property type="match status" value="1"/>
</dbReference>
<dbReference type="SUPFAM" id="SSF51283">
    <property type="entry name" value="dUTPase-like"/>
    <property type="match status" value="1"/>
</dbReference>
<proteinExistence type="inferred from homology"/>
<name>DCD_CAMJR</name>
<gene>
    <name evidence="1" type="primary">dcd</name>
    <name type="ordered locus">CJE1484</name>
</gene>
<sequence>MGLKADNWIRKMALEHKMIEPFCEANIGKGVVSYGLSSYGYDIRVGREFKIFTNVNSTVVDPKNFVEENVVDFEGDVCIVPANSFTLARTIEYFKMPDDVLAICLGKSTYARCGIIVNVTPFEPGFEGHITIEISNTTPLPAKIYANEGIAQVLFLQGDEKCDTTYKDKKGKYQAQTGITLPRILK</sequence>
<protein>
    <recommendedName>
        <fullName evidence="1">dCTP deaminase</fullName>
        <ecNumber evidence="1">3.5.4.13</ecNumber>
    </recommendedName>
    <alternativeName>
        <fullName evidence="1">Deoxycytidine triphosphate deaminase</fullName>
    </alternativeName>
</protein>
<reference key="1">
    <citation type="journal article" date="2005" name="PLoS Biol.">
        <title>Major structural differences and novel potential virulence mechanisms from the genomes of multiple Campylobacter species.</title>
        <authorList>
            <person name="Fouts D.E."/>
            <person name="Mongodin E.F."/>
            <person name="Mandrell R.E."/>
            <person name="Miller W.G."/>
            <person name="Rasko D.A."/>
            <person name="Ravel J."/>
            <person name="Brinkac L.M."/>
            <person name="DeBoy R.T."/>
            <person name="Parker C.T."/>
            <person name="Daugherty S.C."/>
            <person name="Dodson R.J."/>
            <person name="Durkin A.S."/>
            <person name="Madupu R."/>
            <person name="Sullivan S.A."/>
            <person name="Shetty J.U."/>
            <person name="Ayodeji M.A."/>
            <person name="Shvartsbeyn A."/>
            <person name="Schatz M.C."/>
            <person name="Badger J.H."/>
            <person name="Fraser C.M."/>
            <person name="Nelson K.E."/>
        </authorList>
    </citation>
    <scope>NUCLEOTIDE SEQUENCE [LARGE SCALE GENOMIC DNA]</scope>
    <source>
        <strain>RM1221</strain>
    </source>
</reference>
<feature type="chain" id="PRO_0000155973" description="dCTP deaminase">
    <location>
        <begin position="1"/>
        <end position="186"/>
    </location>
</feature>
<feature type="active site" description="Proton donor/acceptor" evidence="1">
    <location>
        <position position="133"/>
    </location>
</feature>
<feature type="binding site" evidence="1">
    <location>
        <begin position="107"/>
        <end position="112"/>
    </location>
    <ligand>
        <name>dCTP</name>
        <dbReference type="ChEBI" id="CHEBI:61481"/>
    </ligand>
</feature>
<feature type="binding site" evidence="1">
    <location>
        <position position="152"/>
    </location>
    <ligand>
        <name>dCTP</name>
        <dbReference type="ChEBI" id="CHEBI:61481"/>
    </ligand>
</feature>
<feature type="binding site" evidence="1">
    <location>
        <position position="166"/>
    </location>
    <ligand>
        <name>dCTP</name>
        <dbReference type="ChEBI" id="CHEBI:61481"/>
    </ligand>
</feature>
<feature type="binding site" evidence="1">
    <location>
        <position position="176"/>
    </location>
    <ligand>
        <name>dCTP</name>
        <dbReference type="ChEBI" id="CHEBI:61481"/>
    </ligand>
</feature>
<evidence type="ECO:0000255" key="1">
    <source>
        <dbReference type="HAMAP-Rule" id="MF_00146"/>
    </source>
</evidence>